<dbReference type="EMBL" id="CP000285">
    <property type="protein sequence ID" value="ABE58951.1"/>
    <property type="molecule type" value="Genomic_DNA"/>
</dbReference>
<dbReference type="RefSeq" id="WP_011506897.1">
    <property type="nucleotide sequence ID" value="NC_007963.1"/>
</dbReference>
<dbReference type="SMR" id="Q1QX57"/>
<dbReference type="STRING" id="290398.Csal_1598"/>
<dbReference type="GeneID" id="95334329"/>
<dbReference type="KEGG" id="csa:Csal_1598"/>
<dbReference type="eggNOG" id="COG0333">
    <property type="taxonomic scope" value="Bacteria"/>
</dbReference>
<dbReference type="HOGENOM" id="CLU_129084_2_1_6"/>
<dbReference type="OrthoDB" id="9801927at2"/>
<dbReference type="Proteomes" id="UP000000239">
    <property type="component" value="Chromosome"/>
</dbReference>
<dbReference type="GO" id="GO:0015934">
    <property type="term" value="C:large ribosomal subunit"/>
    <property type="evidence" value="ECO:0007669"/>
    <property type="project" value="InterPro"/>
</dbReference>
<dbReference type="GO" id="GO:0003735">
    <property type="term" value="F:structural constituent of ribosome"/>
    <property type="evidence" value="ECO:0007669"/>
    <property type="project" value="InterPro"/>
</dbReference>
<dbReference type="GO" id="GO:0006412">
    <property type="term" value="P:translation"/>
    <property type="evidence" value="ECO:0007669"/>
    <property type="project" value="UniProtKB-UniRule"/>
</dbReference>
<dbReference type="HAMAP" id="MF_00340">
    <property type="entry name" value="Ribosomal_bL32"/>
    <property type="match status" value="1"/>
</dbReference>
<dbReference type="InterPro" id="IPR002677">
    <property type="entry name" value="Ribosomal_bL32"/>
</dbReference>
<dbReference type="InterPro" id="IPR044957">
    <property type="entry name" value="Ribosomal_bL32_bact"/>
</dbReference>
<dbReference type="InterPro" id="IPR011332">
    <property type="entry name" value="Ribosomal_zn-bd"/>
</dbReference>
<dbReference type="NCBIfam" id="TIGR01031">
    <property type="entry name" value="rpmF_bact"/>
    <property type="match status" value="1"/>
</dbReference>
<dbReference type="PANTHER" id="PTHR35534">
    <property type="entry name" value="50S RIBOSOMAL PROTEIN L32"/>
    <property type="match status" value="1"/>
</dbReference>
<dbReference type="PANTHER" id="PTHR35534:SF1">
    <property type="entry name" value="LARGE RIBOSOMAL SUBUNIT PROTEIN BL32"/>
    <property type="match status" value="1"/>
</dbReference>
<dbReference type="Pfam" id="PF01783">
    <property type="entry name" value="Ribosomal_L32p"/>
    <property type="match status" value="1"/>
</dbReference>
<dbReference type="SUPFAM" id="SSF57829">
    <property type="entry name" value="Zn-binding ribosomal proteins"/>
    <property type="match status" value="1"/>
</dbReference>
<accession>Q1QX57</accession>
<reference key="1">
    <citation type="journal article" date="2011" name="Stand. Genomic Sci.">
        <title>Complete genome sequence of the halophilic and highly halotolerant Chromohalobacter salexigens type strain (1H11(T)).</title>
        <authorList>
            <person name="Copeland A."/>
            <person name="O'Connor K."/>
            <person name="Lucas S."/>
            <person name="Lapidus A."/>
            <person name="Berry K.W."/>
            <person name="Detter J.C."/>
            <person name="Del Rio T.G."/>
            <person name="Hammon N."/>
            <person name="Dalin E."/>
            <person name="Tice H."/>
            <person name="Pitluck S."/>
            <person name="Bruce D."/>
            <person name="Goodwin L."/>
            <person name="Han C."/>
            <person name="Tapia R."/>
            <person name="Saunders E."/>
            <person name="Schmutz J."/>
            <person name="Brettin T."/>
            <person name="Larimer F."/>
            <person name="Land M."/>
            <person name="Hauser L."/>
            <person name="Vargas C."/>
            <person name="Nieto J.J."/>
            <person name="Kyrpides N.C."/>
            <person name="Ivanova N."/>
            <person name="Goker M."/>
            <person name="Klenk H.P."/>
            <person name="Csonka L.N."/>
            <person name="Woyke T."/>
        </authorList>
    </citation>
    <scope>NUCLEOTIDE SEQUENCE [LARGE SCALE GENOMIC DNA]</scope>
    <source>
        <strain>ATCC BAA-138 / DSM 3043 / CIP 106854 / NCIMB 13768 / 1H11</strain>
    </source>
</reference>
<evidence type="ECO:0000255" key="1">
    <source>
        <dbReference type="HAMAP-Rule" id="MF_00340"/>
    </source>
</evidence>
<evidence type="ECO:0000256" key="2">
    <source>
        <dbReference type="SAM" id="MobiDB-lite"/>
    </source>
</evidence>
<evidence type="ECO:0000305" key="3"/>
<sequence length="56" mass="6428">MAVQQNRKTRSKRGMRRSHDALSAPTLSQDKETGTTHRRHHVAPDGFYRGRKVVDV</sequence>
<feature type="chain" id="PRO_0000296446" description="Large ribosomal subunit protein bL32">
    <location>
        <begin position="1"/>
        <end position="56"/>
    </location>
</feature>
<feature type="region of interest" description="Disordered" evidence="2">
    <location>
        <begin position="1"/>
        <end position="56"/>
    </location>
</feature>
<feature type="compositionally biased region" description="Basic residues" evidence="2">
    <location>
        <begin position="7"/>
        <end position="16"/>
    </location>
</feature>
<organism>
    <name type="scientific">Chromohalobacter salexigens (strain ATCC BAA-138 / DSM 3043 / CIP 106854 / NCIMB 13768 / 1H11)</name>
    <dbReference type="NCBI Taxonomy" id="290398"/>
    <lineage>
        <taxon>Bacteria</taxon>
        <taxon>Pseudomonadati</taxon>
        <taxon>Pseudomonadota</taxon>
        <taxon>Gammaproteobacteria</taxon>
        <taxon>Oceanospirillales</taxon>
        <taxon>Halomonadaceae</taxon>
        <taxon>Chromohalobacter</taxon>
    </lineage>
</organism>
<gene>
    <name evidence="1" type="primary">rpmF</name>
    <name type="ordered locus">Csal_1598</name>
</gene>
<comment type="similarity">
    <text evidence="1">Belongs to the bacterial ribosomal protein bL32 family.</text>
</comment>
<protein>
    <recommendedName>
        <fullName evidence="1">Large ribosomal subunit protein bL32</fullName>
    </recommendedName>
    <alternativeName>
        <fullName evidence="3">50S ribosomal protein L32</fullName>
    </alternativeName>
</protein>
<name>RL32_CHRSD</name>
<proteinExistence type="inferred from homology"/>
<keyword id="KW-1185">Reference proteome</keyword>
<keyword id="KW-0687">Ribonucleoprotein</keyword>
<keyword id="KW-0689">Ribosomal protein</keyword>